<gene>
    <name type="ordered locus">MIMI_L620</name>
</gene>
<dbReference type="EC" id="3.1.1.-"/>
<dbReference type="EMBL" id="AY653733">
    <property type="protein sequence ID" value="AAV50881.1"/>
    <property type="molecule type" value="Genomic_DNA"/>
</dbReference>
<dbReference type="KEGG" id="vg:9925261"/>
<dbReference type="OrthoDB" id="10110at10239"/>
<dbReference type="Proteomes" id="UP000001134">
    <property type="component" value="Genome"/>
</dbReference>
<dbReference type="GO" id="GO:0016787">
    <property type="term" value="F:hydrolase activity"/>
    <property type="evidence" value="ECO:0007669"/>
    <property type="project" value="UniProtKB-KW"/>
</dbReference>
<dbReference type="GO" id="GO:0016042">
    <property type="term" value="P:lipid catabolic process"/>
    <property type="evidence" value="ECO:0007669"/>
    <property type="project" value="UniProtKB-KW"/>
</dbReference>
<dbReference type="Gene3D" id="3.40.1090.10">
    <property type="entry name" value="Cytosolic phospholipase A2 catalytic domain"/>
    <property type="match status" value="1"/>
</dbReference>
<dbReference type="InterPro" id="IPR016035">
    <property type="entry name" value="Acyl_Trfase/lysoPLipase"/>
</dbReference>
<dbReference type="InterPro" id="IPR050301">
    <property type="entry name" value="NTE"/>
</dbReference>
<dbReference type="InterPro" id="IPR002641">
    <property type="entry name" value="PNPLA_dom"/>
</dbReference>
<dbReference type="PANTHER" id="PTHR14226:SF57">
    <property type="entry name" value="BLR7027 PROTEIN"/>
    <property type="match status" value="1"/>
</dbReference>
<dbReference type="PANTHER" id="PTHR14226">
    <property type="entry name" value="NEUROPATHY TARGET ESTERASE/SWISS CHEESE D.MELANOGASTER"/>
    <property type="match status" value="1"/>
</dbReference>
<dbReference type="Pfam" id="PF01734">
    <property type="entry name" value="Patatin"/>
    <property type="match status" value="1"/>
</dbReference>
<dbReference type="SUPFAM" id="SSF52151">
    <property type="entry name" value="FabD/lysophospholipase-like"/>
    <property type="match status" value="1"/>
</dbReference>
<dbReference type="PROSITE" id="PS51635">
    <property type="entry name" value="PNPLA"/>
    <property type="match status" value="1"/>
</dbReference>
<organismHost>
    <name type="scientific">Acanthamoeba polyphaga</name>
    <name type="common">Amoeba</name>
    <dbReference type="NCBI Taxonomy" id="5757"/>
</organismHost>
<organism>
    <name type="scientific">Acanthamoeba polyphaga mimivirus</name>
    <name type="common">APMV</name>
    <dbReference type="NCBI Taxonomy" id="212035"/>
    <lineage>
        <taxon>Viruses</taxon>
        <taxon>Varidnaviria</taxon>
        <taxon>Bamfordvirae</taxon>
        <taxon>Nucleocytoviricota</taxon>
        <taxon>Megaviricetes</taxon>
        <taxon>Imitervirales</taxon>
        <taxon>Mimiviridae</taxon>
        <taxon>Megamimivirinae</taxon>
        <taxon>Mimivirus</taxon>
        <taxon>Mimivirus bradfordmassiliense</taxon>
    </lineage>
</organism>
<accession>Q5UR65</accession>
<keyword id="KW-0378">Hydrolase</keyword>
<keyword id="KW-0442">Lipid degradation</keyword>
<keyword id="KW-0443">Lipid metabolism</keyword>
<keyword id="KW-1185">Reference proteome</keyword>
<feature type="chain" id="PRO_0000251124" description="Uncharacterized protein L620">
    <location>
        <begin position="1"/>
        <end position="372"/>
    </location>
</feature>
<feature type="domain" description="PNPLA" evidence="2">
    <location>
        <begin position="38"/>
        <end position="270"/>
    </location>
</feature>
<feature type="short sequence motif" description="GXGXXG" evidence="2">
    <location>
        <begin position="42"/>
        <end position="47"/>
    </location>
</feature>
<feature type="short sequence motif" description="GXSXG" evidence="2">
    <location>
        <begin position="74"/>
        <end position="78"/>
    </location>
</feature>
<feature type="short sequence motif" description="DGA/G" evidence="2">
    <location>
        <begin position="257"/>
        <end position="259"/>
    </location>
</feature>
<feature type="active site" description="Nucleophile" evidence="2">
    <location>
        <position position="76"/>
    </location>
</feature>
<feature type="active site" description="Proton acceptor" evidence="2">
    <location>
        <position position="257"/>
    </location>
</feature>
<comment type="function">
    <text evidence="1">Probable lipid hydrolase.</text>
</comment>
<reference key="1">
    <citation type="journal article" date="2004" name="Science">
        <title>The 1.2-megabase genome sequence of Mimivirus.</title>
        <authorList>
            <person name="Raoult D."/>
            <person name="Audic S."/>
            <person name="Robert C."/>
            <person name="Abergel C."/>
            <person name="Renesto P."/>
            <person name="Ogata H."/>
            <person name="La Scola B."/>
            <person name="Susan M."/>
            <person name="Claverie J.-M."/>
        </authorList>
    </citation>
    <scope>NUCLEOTIDE SEQUENCE [LARGE SCALE GENOMIC DNA]</scope>
    <source>
        <strain>Rowbotham-Bradford</strain>
    </source>
</reference>
<name>YL620_MIMIV</name>
<proteinExistence type="inferred from homology"/>
<sequence>MLEKYISIKMRVNPVNNTINNTDDIKSTSLFPKKKNVFFIEGGGTKGVYAMGVLNYLYDENVYIKLQDVDIFGGTSVGSILAVGLSLGYQKKDFEKFVETFDLSKFVDSKYYAPFTLYRFLTKGHLYDDTNRQTLVKKILNINIETIRSHLDLPIDSDFEGTDITFWHLKKLIKKYPQIYKHLLINSVDISREQQIFMTTLDDNWDNIKLYDSILASSAFPFVFPSSKFYYNSTTQKYQYESLTDTNDKITENSFIDGGVANNIPLDYLILNSERFTDCNLWSLQFTTTPAYSKITGPIALIQKLINFAFSYGRKSFGLELIHEKYQVNVINLNLSANTFDTYNNNQIKEITRQIYDQCLSGQLHFDNVDSQ</sequence>
<evidence type="ECO:0000250" key="1"/>
<evidence type="ECO:0000255" key="2">
    <source>
        <dbReference type="PROSITE-ProRule" id="PRU01161"/>
    </source>
</evidence>
<protein>
    <recommendedName>
        <fullName>Uncharacterized protein L620</fullName>
        <ecNumber>3.1.1.-</ecNumber>
    </recommendedName>
</protein>